<protein>
    <recommendedName>
        <fullName evidence="1">HTH-type transcriptional activator RhaS</fullName>
    </recommendedName>
    <alternativeName>
        <fullName evidence="1">L-rhamnose operon regulatory protein RhaS</fullName>
    </alternativeName>
</protein>
<feature type="chain" id="PRO_1000200967" description="HTH-type transcriptional activator RhaS">
    <location>
        <begin position="1"/>
        <end position="273"/>
    </location>
</feature>
<feature type="domain" description="HTH araC/xylS-type" evidence="1">
    <location>
        <begin position="174"/>
        <end position="272"/>
    </location>
</feature>
<feature type="DNA-binding region" description="H-T-H motif" evidence="1">
    <location>
        <begin position="191"/>
        <end position="212"/>
    </location>
</feature>
<feature type="DNA-binding region" description="H-T-H motif" evidence="1">
    <location>
        <begin position="239"/>
        <end position="262"/>
    </location>
</feature>
<feature type="site" description="Interaction with sigma-70" evidence="1">
    <location>
        <position position="241"/>
    </location>
</feature>
<feature type="site" description="Interaction with sigma-70" evidence="1">
    <location>
        <position position="250"/>
    </location>
</feature>
<keyword id="KW-0010">Activator</keyword>
<keyword id="KW-0963">Cytoplasm</keyword>
<keyword id="KW-0238">DNA-binding</keyword>
<keyword id="KW-0677">Repeat</keyword>
<keyword id="KW-0684">Rhamnose metabolism</keyword>
<keyword id="KW-0804">Transcription</keyword>
<keyword id="KW-0805">Transcription regulation</keyword>
<comment type="function">
    <text evidence="1">Activates expression of the rhaBAD and rhaT operons.</text>
</comment>
<comment type="subunit">
    <text evidence="1">Binds DNA as a dimer.</text>
</comment>
<comment type="subcellular location">
    <subcellularLocation>
        <location evidence="1">Cytoplasm</location>
    </subcellularLocation>
</comment>
<organism>
    <name type="scientific">Yersinia pestis bv. Antiqua (strain Angola)</name>
    <dbReference type="NCBI Taxonomy" id="349746"/>
    <lineage>
        <taxon>Bacteria</taxon>
        <taxon>Pseudomonadati</taxon>
        <taxon>Pseudomonadota</taxon>
        <taxon>Gammaproteobacteria</taxon>
        <taxon>Enterobacterales</taxon>
        <taxon>Yersiniaceae</taxon>
        <taxon>Yersinia</taxon>
    </lineage>
</organism>
<sequence>MTVLHSIDFFSSSSAPVAIEARAPQSAFPEHHHDFYEIVIVEEGAGVHVFNGNPYTLSRGCVCFVRDHDRHLFESTDDLFLTNVLFRAPDAFRFLSGVGHFLPRECDGVYPSHWRVNGQVLQQIKCLIACLEHAPKSDQVEDIALHESVFMQLLVKLWQGCQTQVGDDQEGRLYQLLDWLQNNYSEAVEWPELADRFALPLRTLHRQLKNKTGMTPQRYLTRLRLLQARHQLCYSDNSVTDIAYLCGFGDSNHFSTLFKREFSQSPRDLRSQL</sequence>
<name>RHAS_YERPG</name>
<gene>
    <name evidence="1" type="primary">rhaS</name>
    <name type="ordered locus">YpAngola_A0740</name>
</gene>
<accession>A9QYR8</accession>
<evidence type="ECO:0000255" key="1">
    <source>
        <dbReference type="HAMAP-Rule" id="MF_01534"/>
    </source>
</evidence>
<dbReference type="EMBL" id="CP000901">
    <property type="protein sequence ID" value="ABX85213.1"/>
    <property type="molecule type" value="Genomic_DNA"/>
</dbReference>
<dbReference type="RefSeq" id="WP_002230460.1">
    <property type="nucleotide sequence ID" value="NZ_CP009935.1"/>
</dbReference>
<dbReference type="SMR" id="A9QYR8"/>
<dbReference type="KEGG" id="ypg:YpAngola_A0740"/>
<dbReference type="PATRIC" id="fig|349746.12.peg.1688"/>
<dbReference type="GO" id="GO:0005737">
    <property type="term" value="C:cytoplasm"/>
    <property type="evidence" value="ECO:0007669"/>
    <property type="project" value="UniProtKB-SubCell"/>
</dbReference>
<dbReference type="GO" id="GO:0003700">
    <property type="term" value="F:DNA-binding transcription factor activity"/>
    <property type="evidence" value="ECO:0007669"/>
    <property type="project" value="UniProtKB-UniRule"/>
</dbReference>
<dbReference type="GO" id="GO:0043565">
    <property type="term" value="F:sequence-specific DNA binding"/>
    <property type="evidence" value="ECO:0007669"/>
    <property type="project" value="InterPro"/>
</dbReference>
<dbReference type="GO" id="GO:0045893">
    <property type="term" value="P:positive regulation of DNA-templated transcription"/>
    <property type="evidence" value="ECO:0007669"/>
    <property type="project" value="UniProtKB-UniRule"/>
</dbReference>
<dbReference type="GO" id="GO:0019299">
    <property type="term" value="P:rhamnose metabolic process"/>
    <property type="evidence" value="ECO:0007669"/>
    <property type="project" value="UniProtKB-UniRule"/>
</dbReference>
<dbReference type="CDD" id="cd06977">
    <property type="entry name" value="cupin_RhaR_RhaS-like_N"/>
    <property type="match status" value="1"/>
</dbReference>
<dbReference type="Gene3D" id="1.10.10.60">
    <property type="entry name" value="Homeodomain-like"/>
    <property type="match status" value="1"/>
</dbReference>
<dbReference type="Gene3D" id="2.60.120.10">
    <property type="entry name" value="Jelly Rolls"/>
    <property type="match status" value="1"/>
</dbReference>
<dbReference type="HAMAP" id="MF_01534">
    <property type="entry name" value="HTH_type_RhaS"/>
    <property type="match status" value="1"/>
</dbReference>
<dbReference type="InterPro" id="IPR003313">
    <property type="entry name" value="AraC-bd"/>
</dbReference>
<dbReference type="InterPro" id="IPR050204">
    <property type="entry name" value="AraC_XylS_family_regulators"/>
</dbReference>
<dbReference type="InterPro" id="IPR009057">
    <property type="entry name" value="Homeodomain-like_sf"/>
</dbReference>
<dbReference type="InterPro" id="IPR037923">
    <property type="entry name" value="HTH-like"/>
</dbReference>
<dbReference type="InterPro" id="IPR018060">
    <property type="entry name" value="HTH_AraC"/>
</dbReference>
<dbReference type="InterPro" id="IPR018062">
    <property type="entry name" value="HTH_AraC-typ_CS"/>
</dbReference>
<dbReference type="InterPro" id="IPR047220">
    <property type="entry name" value="RhaR_RhaS-like_N"/>
</dbReference>
<dbReference type="InterPro" id="IPR014710">
    <property type="entry name" value="RmlC-like_jellyroll"/>
</dbReference>
<dbReference type="InterPro" id="IPR020449">
    <property type="entry name" value="Tscrpt_reg_AraC-type_HTH"/>
</dbReference>
<dbReference type="InterPro" id="IPR023609">
    <property type="entry name" value="Tscrpt_reg_HTH_RhaS"/>
</dbReference>
<dbReference type="NCBIfam" id="NF010028">
    <property type="entry name" value="PRK13503.1"/>
    <property type="match status" value="1"/>
</dbReference>
<dbReference type="PANTHER" id="PTHR46796:SF13">
    <property type="entry name" value="HTH-TYPE TRANSCRIPTIONAL ACTIVATOR RHAS"/>
    <property type="match status" value="1"/>
</dbReference>
<dbReference type="PANTHER" id="PTHR46796">
    <property type="entry name" value="HTH-TYPE TRANSCRIPTIONAL ACTIVATOR RHAS-RELATED"/>
    <property type="match status" value="1"/>
</dbReference>
<dbReference type="Pfam" id="PF02311">
    <property type="entry name" value="AraC_binding"/>
    <property type="match status" value="1"/>
</dbReference>
<dbReference type="Pfam" id="PF12833">
    <property type="entry name" value="HTH_18"/>
    <property type="match status" value="1"/>
</dbReference>
<dbReference type="PRINTS" id="PR00032">
    <property type="entry name" value="HTHARAC"/>
</dbReference>
<dbReference type="SMART" id="SM00342">
    <property type="entry name" value="HTH_ARAC"/>
    <property type="match status" value="1"/>
</dbReference>
<dbReference type="SUPFAM" id="SSF46689">
    <property type="entry name" value="Homeodomain-like"/>
    <property type="match status" value="2"/>
</dbReference>
<dbReference type="SUPFAM" id="SSF51215">
    <property type="entry name" value="Regulatory protein AraC"/>
    <property type="match status" value="1"/>
</dbReference>
<dbReference type="PROSITE" id="PS00041">
    <property type="entry name" value="HTH_ARAC_FAMILY_1"/>
    <property type="match status" value="1"/>
</dbReference>
<dbReference type="PROSITE" id="PS01124">
    <property type="entry name" value="HTH_ARAC_FAMILY_2"/>
    <property type="match status" value="1"/>
</dbReference>
<proteinExistence type="inferred from homology"/>
<reference key="1">
    <citation type="journal article" date="2010" name="J. Bacteriol.">
        <title>Genome sequence of the deep-rooted Yersinia pestis strain Angola reveals new insights into the evolution and pangenome of the plague bacterium.</title>
        <authorList>
            <person name="Eppinger M."/>
            <person name="Worsham P.L."/>
            <person name="Nikolich M.P."/>
            <person name="Riley D.R."/>
            <person name="Sebastian Y."/>
            <person name="Mou S."/>
            <person name="Achtman M."/>
            <person name="Lindler L.E."/>
            <person name="Ravel J."/>
        </authorList>
    </citation>
    <scope>NUCLEOTIDE SEQUENCE [LARGE SCALE GENOMIC DNA]</scope>
    <source>
        <strain>Angola</strain>
    </source>
</reference>